<proteinExistence type="inferred from homology"/>
<accession>Q3JN04</accession>
<keyword id="KW-0028">Amino-acid biosynthesis</keyword>
<keyword id="KW-0067">ATP-binding</keyword>
<keyword id="KW-0963">Cytoplasm</keyword>
<keyword id="KW-0368">Histidine biosynthesis</keyword>
<keyword id="KW-0378">Hydrolase</keyword>
<keyword id="KW-0547">Nucleotide-binding</keyword>
<evidence type="ECO:0000255" key="1">
    <source>
        <dbReference type="HAMAP-Rule" id="MF_01020"/>
    </source>
</evidence>
<dbReference type="EC" id="3.6.1.31" evidence="1"/>
<dbReference type="EMBL" id="CP000124">
    <property type="protein sequence ID" value="ABA49664.1"/>
    <property type="molecule type" value="Genomic_DNA"/>
</dbReference>
<dbReference type="RefSeq" id="WP_004202813.1">
    <property type="nucleotide sequence ID" value="NC_007434.1"/>
</dbReference>
<dbReference type="SMR" id="Q3JN04"/>
<dbReference type="EnsemblBacteria" id="ABA49664">
    <property type="protein sequence ID" value="ABA49664"/>
    <property type="gene ID" value="BURPS1710b_3685"/>
</dbReference>
<dbReference type="KEGG" id="bpm:BURPS1710b_3685"/>
<dbReference type="HOGENOM" id="CLU_123337_1_2_4"/>
<dbReference type="UniPathway" id="UPA00031">
    <property type="reaction ID" value="UER00007"/>
</dbReference>
<dbReference type="Proteomes" id="UP000002700">
    <property type="component" value="Chromosome I"/>
</dbReference>
<dbReference type="GO" id="GO:0005737">
    <property type="term" value="C:cytoplasm"/>
    <property type="evidence" value="ECO:0007669"/>
    <property type="project" value="UniProtKB-SubCell"/>
</dbReference>
<dbReference type="GO" id="GO:0005524">
    <property type="term" value="F:ATP binding"/>
    <property type="evidence" value="ECO:0007669"/>
    <property type="project" value="UniProtKB-KW"/>
</dbReference>
<dbReference type="GO" id="GO:0004636">
    <property type="term" value="F:phosphoribosyl-ATP diphosphatase activity"/>
    <property type="evidence" value="ECO:0007669"/>
    <property type="project" value="UniProtKB-UniRule"/>
</dbReference>
<dbReference type="GO" id="GO:0000105">
    <property type="term" value="P:L-histidine biosynthetic process"/>
    <property type="evidence" value="ECO:0007669"/>
    <property type="project" value="UniProtKB-UniRule"/>
</dbReference>
<dbReference type="CDD" id="cd11534">
    <property type="entry name" value="NTP-PPase_HisIE_like"/>
    <property type="match status" value="1"/>
</dbReference>
<dbReference type="Gene3D" id="1.10.287.1080">
    <property type="entry name" value="MazG-like"/>
    <property type="match status" value="1"/>
</dbReference>
<dbReference type="HAMAP" id="MF_01020">
    <property type="entry name" value="HisE"/>
    <property type="match status" value="1"/>
</dbReference>
<dbReference type="InterPro" id="IPR008179">
    <property type="entry name" value="HisE"/>
</dbReference>
<dbReference type="InterPro" id="IPR021130">
    <property type="entry name" value="PRib-ATP_PPHydrolase-like"/>
</dbReference>
<dbReference type="NCBIfam" id="TIGR03188">
    <property type="entry name" value="histidine_hisI"/>
    <property type="match status" value="1"/>
</dbReference>
<dbReference type="NCBIfam" id="NF001611">
    <property type="entry name" value="PRK00400.1-3"/>
    <property type="match status" value="1"/>
</dbReference>
<dbReference type="PANTHER" id="PTHR42945">
    <property type="entry name" value="HISTIDINE BIOSYNTHESIS BIFUNCTIONAL PROTEIN"/>
    <property type="match status" value="1"/>
</dbReference>
<dbReference type="PANTHER" id="PTHR42945:SF9">
    <property type="entry name" value="HISTIDINE BIOSYNTHESIS BIFUNCTIONAL PROTEIN HISIE"/>
    <property type="match status" value="1"/>
</dbReference>
<dbReference type="Pfam" id="PF01503">
    <property type="entry name" value="PRA-PH"/>
    <property type="match status" value="1"/>
</dbReference>
<dbReference type="SUPFAM" id="SSF101386">
    <property type="entry name" value="all-alpha NTP pyrophosphatases"/>
    <property type="match status" value="1"/>
</dbReference>
<comment type="catalytic activity">
    <reaction evidence="1">
        <text>1-(5-phospho-beta-D-ribosyl)-ATP + H2O = 1-(5-phospho-beta-D-ribosyl)-5'-AMP + diphosphate + H(+)</text>
        <dbReference type="Rhea" id="RHEA:22828"/>
        <dbReference type="ChEBI" id="CHEBI:15377"/>
        <dbReference type="ChEBI" id="CHEBI:15378"/>
        <dbReference type="ChEBI" id="CHEBI:33019"/>
        <dbReference type="ChEBI" id="CHEBI:59457"/>
        <dbReference type="ChEBI" id="CHEBI:73183"/>
        <dbReference type="EC" id="3.6.1.31"/>
    </reaction>
</comment>
<comment type="pathway">
    <text evidence="1">Amino-acid biosynthesis; L-histidine biosynthesis; L-histidine from 5-phospho-alpha-D-ribose 1-diphosphate: step 2/9.</text>
</comment>
<comment type="subcellular location">
    <subcellularLocation>
        <location evidence="1">Cytoplasm</location>
    </subcellularLocation>
</comment>
<comment type="similarity">
    <text evidence="1">Belongs to the PRA-PH family.</text>
</comment>
<reference key="1">
    <citation type="journal article" date="2010" name="Genome Biol. Evol.">
        <title>Continuing evolution of Burkholderia mallei through genome reduction and large-scale rearrangements.</title>
        <authorList>
            <person name="Losada L."/>
            <person name="Ronning C.M."/>
            <person name="DeShazer D."/>
            <person name="Woods D."/>
            <person name="Fedorova N."/>
            <person name="Kim H.S."/>
            <person name="Shabalina S.A."/>
            <person name="Pearson T.R."/>
            <person name="Brinkac L."/>
            <person name="Tan P."/>
            <person name="Nandi T."/>
            <person name="Crabtree J."/>
            <person name="Badger J."/>
            <person name="Beckstrom-Sternberg S."/>
            <person name="Saqib M."/>
            <person name="Schutzer S.E."/>
            <person name="Keim P."/>
            <person name="Nierman W.C."/>
        </authorList>
    </citation>
    <scope>NUCLEOTIDE SEQUENCE [LARGE SCALE GENOMIC DNA]</scope>
    <source>
        <strain>1710b</strain>
    </source>
</reference>
<feature type="chain" id="PRO_0000230172" description="Phosphoribosyl-ATP pyrophosphatase">
    <location>
        <begin position="1"/>
        <end position="122"/>
    </location>
</feature>
<name>HIS2_BURP1</name>
<gene>
    <name evidence="1" type="primary">hisE</name>
    <name type="ordered locus">BURPS1710b_3685</name>
</gene>
<protein>
    <recommendedName>
        <fullName evidence="1">Phosphoribosyl-ATP pyrophosphatase</fullName>
        <shortName evidence="1">PRA-PH</shortName>
        <ecNumber evidence="1">3.6.1.31</ecNumber>
    </recommendedName>
</protein>
<organism>
    <name type="scientific">Burkholderia pseudomallei (strain 1710b)</name>
    <dbReference type="NCBI Taxonomy" id="320372"/>
    <lineage>
        <taxon>Bacteria</taxon>
        <taxon>Pseudomonadati</taxon>
        <taxon>Pseudomonadota</taxon>
        <taxon>Betaproteobacteria</taxon>
        <taxon>Burkholderiales</taxon>
        <taxon>Burkholderiaceae</taxon>
        <taxon>Burkholderia</taxon>
        <taxon>pseudomallei group</taxon>
    </lineage>
</organism>
<sequence length="122" mass="13361">MTQSTTEDTLLRLAAVIDSRKGGDPEQSYVSRLFHKGDDAILKKIGEEATEVVLAAKDVRQGGAPSALVGEVADLWFHCLVALSHFDLSPADVIAELERREGMSGIEEKALRKRREREENGG</sequence>